<reference key="1">
    <citation type="book" date="2006" name="Gram positive pathogens, 2nd edition">
        <title>The Staphylococcus aureus NCTC 8325 genome.</title>
        <editorList>
            <person name="Fischetti V."/>
            <person name="Novick R."/>
            <person name="Ferretti J."/>
            <person name="Portnoy D."/>
            <person name="Rood J."/>
        </editorList>
        <authorList>
            <person name="Gillaspy A.F."/>
            <person name="Worrell V."/>
            <person name="Orvis J."/>
            <person name="Roe B.A."/>
            <person name="Dyer D.W."/>
            <person name="Iandolo J.J."/>
        </authorList>
    </citation>
    <scope>NUCLEOTIDE SEQUENCE [LARGE SCALE GENOMIC DNA]</scope>
    <source>
        <strain>NCTC 8325 / PS 47</strain>
    </source>
</reference>
<sequence length="295" mass="31993">MSKIIGSDRVKRGMAEMQKGGVIMDVVNAEQARIAEEAGAVAVMALERVPSDIRAAGGVARMANPKIVEEVMNAVSIPVMAKARIGHITEARVLEAMGVDYIDESEVLTPADEEYHLRKDQFTVPFVCGCRNLGEAARRIGEGAAMLRTKGEPGTGNIVEAVRHMRQVNSEVSRLTVMNDDEIMTFAKDIGAPYEILKQIKDNGRLPVVNFAAGGVATPQDAALMMELGADGVFVGSGIFKSEDPEKFAKAIVQATTHYQDYELIGRLASELGTAMKGLDINQLSLEERMQERGW</sequence>
<name>PDXS_STAA8</name>
<feature type="chain" id="PRO_1000070397" description="Pyridoxal 5'-phosphate synthase subunit PdxS">
    <location>
        <begin position="1"/>
        <end position="295"/>
    </location>
</feature>
<feature type="active site" description="Schiff-base intermediate with D-ribose 5-phosphate" evidence="1">
    <location>
        <position position="82"/>
    </location>
</feature>
<feature type="binding site" evidence="1">
    <location>
        <position position="25"/>
    </location>
    <ligand>
        <name>D-ribose 5-phosphate</name>
        <dbReference type="ChEBI" id="CHEBI:78346"/>
    </ligand>
</feature>
<feature type="binding site" evidence="1">
    <location>
        <position position="154"/>
    </location>
    <ligand>
        <name>D-ribose 5-phosphate</name>
        <dbReference type="ChEBI" id="CHEBI:78346"/>
    </ligand>
</feature>
<feature type="binding site" evidence="1">
    <location>
        <position position="166"/>
    </location>
    <ligand>
        <name>D-glyceraldehyde 3-phosphate</name>
        <dbReference type="ChEBI" id="CHEBI:59776"/>
    </ligand>
</feature>
<feature type="binding site" evidence="1">
    <location>
        <position position="215"/>
    </location>
    <ligand>
        <name>D-ribose 5-phosphate</name>
        <dbReference type="ChEBI" id="CHEBI:78346"/>
    </ligand>
</feature>
<feature type="binding site" evidence="1">
    <location>
        <begin position="236"/>
        <end position="237"/>
    </location>
    <ligand>
        <name>D-ribose 5-phosphate</name>
        <dbReference type="ChEBI" id="CHEBI:78346"/>
    </ligand>
</feature>
<feature type="strand" evidence="2">
    <location>
        <begin position="21"/>
        <end position="28"/>
    </location>
</feature>
<feature type="helix" evidence="2">
    <location>
        <begin position="29"/>
        <end position="38"/>
    </location>
</feature>
<feature type="strand" evidence="2">
    <location>
        <begin position="41"/>
        <end position="45"/>
    </location>
</feature>
<feature type="helix" evidence="2">
    <location>
        <begin position="65"/>
        <end position="74"/>
    </location>
</feature>
<feature type="strand" evidence="2">
    <location>
        <begin position="79"/>
        <end position="83"/>
    </location>
</feature>
<feature type="helix" evidence="2">
    <location>
        <begin position="88"/>
        <end position="97"/>
    </location>
</feature>
<feature type="strand" evidence="2">
    <location>
        <begin position="100"/>
        <end position="104"/>
    </location>
</feature>
<feature type="helix" evidence="2">
    <location>
        <begin position="119"/>
        <end position="121"/>
    </location>
</feature>
<feature type="strand" evidence="2">
    <location>
        <begin position="122"/>
        <end position="124"/>
    </location>
</feature>
<feature type="strand" evidence="2">
    <location>
        <begin position="126"/>
        <end position="132"/>
    </location>
</feature>
<feature type="helix" evidence="2">
    <location>
        <begin position="133"/>
        <end position="141"/>
    </location>
</feature>
<feature type="strand" evidence="2">
    <location>
        <begin position="145"/>
        <end position="149"/>
    </location>
</feature>
<feature type="helix" evidence="2">
    <location>
        <begin position="159"/>
        <end position="176"/>
    </location>
</feature>
<feature type="helix" evidence="2">
    <location>
        <begin position="180"/>
        <end position="182"/>
    </location>
</feature>
<feature type="helix" evidence="2">
    <location>
        <begin position="183"/>
        <end position="190"/>
    </location>
</feature>
<feature type="helix" evidence="2">
    <location>
        <begin position="194"/>
        <end position="203"/>
    </location>
</feature>
<feature type="strand" evidence="2">
    <location>
        <begin position="210"/>
        <end position="214"/>
    </location>
</feature>
<feature type="helix" evidence="2">
    <location>
        <begin position="219"/>
        <end position="227"/>
    </location>
</feature>
<feature type="strand" evidence="2">
    <location>
        <begin position="231"/>
        <end position="235"/>
    </location>
</feature>
<feature type="helix" evidence="2">
    <location>
        <begin position="238"/>
        <end position="241"/>
    </location>
</feature>
<feature type="strand" evidence="2">
    <location>
        <begin position="242"/>
        <end position="244"/>
    </location>
</feature>
<feature type="helix" evidence="2">
    <location>
        <begin position="245"/>
        <end position="256"/>
    </location>
</feature>
<feature type="turn" evidence="2">
    <location>
        <begin position="257"/>
        <end position="260"/>
    </location>
</feature>
<feature type="helix" evidence="2">
    <location>
        <begin position="262"/>
        <end position="270"/>
    </location>
</feature>
<protein>
    <recommendedName>
        <fullName evidence="1">Pyridoxal 5'-phosphate synthase subunit PdxS</fullName>
        <shortName evidence="1">PLP synthase subunit PdxS</shortName>
        <ecNumber evidence="1">4.3.3.6</ecNumber>
    </recommendedName>
    <alternativeName>
        <fullName evidence="1">Pdx1</fullName>
    </alternativeName>
</protein>
<keyword id="KW-0002">3D-structure</keyword>
<keyword id="KW-0456">Lyase</keyword>
<keyword id="KW-0663">Pyridoxal phosphate</keyword>
<keyword id="KW-1185">Reference proteome</keyword>
<keyword id="KW-0704">Schiff base</keyword>
<evidence type="ECO:0000255" key="1">
    <source>
        <dbReference type="HAMAP-Rule" id="MF_01824"/>
    </source>
</evidence>
<evidence type="ECO:0007829" key="2">
    <source>
        <dbReference type="PDB" id="8U9E"/>
    </source>
</evidence>
<dbReference type="EC" id="4.3.3.6" evidence="1"/>
<dbReference type="EMBL" id="CP000253">
    <property type="protein sequence ID" value="ABD29648.1"/>
    <property type="molecule type" value="Genomic_DNA"/>
</dbReference>
<dbReference type="RefSeq" id="WP_000034728.1">
    <property type="nucleotide sequence ID" value="NZ_LS483365.1"/>
</dbReference>
<dbReference type="RefSeq" id="YP_499072.1">
    <property type="nucleotide sequence ID" value="NC_007795.1"/>
</dbReference>
<dbReference type="PDB" id="8QOC">
    <property type="method" value="X-ray"/>
    <property type="resolution" value="2.83 A"/>
    <property type="chains" value="A/B/C/D/E/F/G/H=5-277"/>
</dbReference>
<dbReference type="PDB" id="8U9E">
    <property type="method" value="X-ray"/>
    <property type="resolution" value="3.02 A"/>
    <property type="chains" value="A/B=1-295"/>
</dbReference>
<dbReference type="PDBsum" id="8QOC"/>
<dbReference type="PDBsum" id="8U9E"/>
<dbReference type="SMR" id="Q2G0Q1"/>
<dbReference type="STRING" id="93061.SAOUHSC_00499"/>
<dbReference type="PaxDb" id="1280-SAXN108_0572"/>
<dbReference type="GeneID" id="3920411"/>
<dbReference type="GeneID" id="66838811"/>
<dbReference type="KEGG" id="sao:SAOUHSC_00499"/>
<dbReference type="PATRIC" id="fig|93061.5.peg.446"/>
<dbReference type="eggNOG" id="COG0214">
    <property type="taxonomic scope" value="Bacteria"/>
</dbReference>
<dbReference type="HOGENOM" id="CLU_055352_1_0_9"/>
<dbReference type="OrthoDB" id="9772545at2"/>
<dbReference type="UniPathway" id="UPA00245"/>
<dbReference type="PRO" id="PR:Q2G0Q1"/>
<dbReference type="Proteomes" id="UP000008816">
    <property type="component" value="Chromosome"/>
</dbReference>
<dbReference type="GO" id="GO:0016843">
    <property type="term" value="F:amine-lyase activity"/>
    <property type="evidence" value="ECO:0000318"/>
    <property type="project" value="GO_Central"/>
</dbReference>
<dbReference type="GO" id="GO:0036381">
    <property type="term" value="F:pyridoxal 5'-phosphate synthase (glutamine hydrolysing) activity"/>
    <property type="evidence" value="ECO:0007669"/>
    <property type="project" value="UniProtKB-UniRule"/>
</dbReference>
<dbReference type="GO" id="GO:0006520">
    <property type="term" value="P:amino acid metabolic process"/>
    <property type="evidence" value="ECO:0000318"/>
    <property type="project" value="GO_Central"/>
</dbReference>
<dbReference type="GO" id="GO:0042823">
    <property type="term" value="P:pyridoxal phosphate biosynthetic process"/>
    <property type="evidence" value="ECO:0000318"/>
    <property type="project" value="GO_Central"/>
</dbReference>
<dbReference type="GO" id="GO:0008615">
    <property type="term" value="P:pyridoxine biosynthetic process"/>
    <property type="evidence" value="ECO:0000318"/>
    <property type="project" value="GO_Central"/>
</dbReference>
<dbReference type="CDD" id="cd04727">
    <property type="entry name" value="pdxS"/>
    <property type="match status" value="1"/>
</dbReference>
<dbReference type="FunFam" id="3.20.20.70:FF:000001">
    <property type="entry name" value="Pyridoxine biosynthesis protein PDX1"/>
    <property type="match status" value="1"/>
</dbReference>
<dbReference type="Gene3D" id="3.20.20.70">
    <property type="entry name" value="Aldolase class I"/>
    <property type="match status" value="1"/>
</dbReference>
<dbReference type="HAMAP" id="MF_01824">
    <property type="entry name" value="PdxS"/>
    <property type="match status" value="1"/>
</dbReference>
<dbReference type="InterPro" id="IPR013785">
    <property type="entry name" value="Aldolase_TIM"/>
</dbReference>
<dbReference type="InterPro" id="IPR001852">
    <property type="entry name" value="PdxS/SNZ"/>
</dbReference>
<dbReference type="InterPro" id="IPR033755">
    <property type="entry name" value="PdxS/SNZ_N"/>
</dbReference>
<dbReference type="InterPro" id="IPR011060">
    <property type="entry name" value="RibuloseP-bd_barrel"/>
</dbReference>
<dbReference type="NCBIfam" id="NF003215">
    <property type="entry name" value="PRK04180.1"/>
    <property type="match status" value="1"/>
</dbReference>
<dbReference type="NCBIfam" id="TIGR00343">
    <property type="entry name" value="pyridoxal 5'-phosphate synthase lyase subunit PdxS"/>
    <property type="match status" value="1"/>
</dbReference>
<dbReference type="PANTHER" id="PTHR31829">
    <property type="entry name" value="PYRIDOXAL 5'-PHOSPHATE SYNTHASE SUBUNIT SNZ1-RELATED"/>
    <property type="match status" value="1"/>
</dbReference>
<dbReference type="PANTHER" id="PTHR31829:SF0">
    <property type="entry name" value="PYRIDOXAL 5'-PHOSPHATE SYNTHASE SUBUNIT SNZ1-RELATED"/>
    <property type="match status" value="1"/>
</dbReference>
<dbReference type="Pfam" id="PF01680">
    <property type="entry name" value="SOR_SNZ"/>
    <property type="match status" value="1"/>
</dbReference>
<dbReference type="PIRSF" id="PIRSF029271">
    <property type="entry name" value="Pdx1"/>
    <property type="match status" value="1"/>
</dbReference>
<dbReference type="SUPFAM" id="SSF51366">
    <property type="entry name" value="Ribulose-phoshate binding barrel"/>
    <property type="match status" value="1"/>
</dbReference>
<dbReference type="PROSITE" id="PS01235">
    <property type="entry name" value="PDXS_SNZ_1"/>
    <property type="match status" value="1"/>
</dbReference>
<dbReference type="PROSITE" id="PS51129">
    <property type="entry name" value="PDXS_SNZ_2"/>
    <property type="match status" value="1"/>
</dbReference>
<organism>
    <name type="scientific">Staphylococcus aureus (strain NCTC 8325 / PS 47)</name>
    <dbReference type="NCBI Taxonomy" id="93061"/>
    <lineage>
        <taxon>Bacteria</taxon>
        <taxon>Bacillati</taxon>
        <taxon>Bacillota</taxon>
        <taxon>Bacilli</taxon>
        <taxon>Bacillales</taxon>
        <taxon>Staphylococcaceae</taxon>
        <taxon>Staphylococcus</taxon>
    </lineage>
</organism>
<gene>
    <name evidence="1" type="primary">pdxS</name>
    <name type="ordered locus">SAOUHSC_00499</name>
</gene>
<accession>Q2G0Q1</accession>
<comment type="function">
    <text evidence="1">Catalyzes the formation of pyridoxal 5'-phosphate from ribose 5-phosphate (RBP), glyceraldehyde 3-phosphate (G3P) and ammonia. The ammonia is provided by the PdxT subunit. Can also use ribulose 5-phosphate and dihydroxyacetone phosphate as substrates, resulting from enzyme-catalyzed isomerization of RBP and G3P, respectively.</text>
</comment>
<comment type="catalytic activity">
    <reaction evidence="1">
        <text>aldehydo-D-ribose 5-phosphate + D-glyceraldehyde 3-phosphate + L-glutamine = pyridoxal 5'-phosphate + L-glutamate + phosphate + 3 H2O + H(+)</text>
        <dbReference type="Rhea" id="RHEA:31507"/>
        <dbReference type="ChEBI" id="CHEBI:15377"/>
        <dbReference type="ChEBI" id="CHEBI:15378"/>
        <dbReference type="ChEBI" id="CHEBI:29985"/>
        <dbReference type="ChEBI" id="CHEBI:43474"/>
        <dbReference type="ChEBI" id="CHEBI:58273"/>
        <dbReference type="ChEBI" id="CHEBI:58359"/>
        <dbReference type="ChEBI" id="CHEBI:59776"/>
        <dbReference type="ChEBI" id="CHEBI:597326"/>
        <dbReference type="EC" id="4.3.3.6"/>
    </reaction>
</comment>
<comment type="pathway">
    <text evidence="1">Cofactor biosynthesis; pyridoxal 5'-phosphate biosynthesis.</text>
</comment>
<comment type="subunit">
    <text evidence="1">In the presence of PdxT, forms a dodecamer of heterodimers.</text>
</comment>
<comment type="similarity">
    <text evidence="1">Belongs to the PdxS/SNZ family.</text>
</comment>
<proteinExistence type="evidence at protein level"/>